<accession>A8G7H8</accession>
<protein>
    <recommendedName>
        <fullName evidence="1">Large ribosomal subunit protein bL9</fullName>
    </recommendedName>
    <alternativeName>
        <fullName evidence="2">50S ribosomal protein L9</fullName>
    </alternativeName>
</protein>
<keyword id="KW-0687">Ribonucleoprotein</keyword>
<keyword id="KW-0689">Ribosomal protein</keyword>
<keyword id="KW-0694">RNA-binding</keyword>
<keyword id="KW-0699">rRNA-binding</keyword>
<comment type="function">
    <text evidence="1">Binds to the 23S rRNA.</text>
</comment>
<comment type="similarity">
    <text evidence="1">Belongs to the bacterial ribosomal protein bL9 family.</text>
</comment>
<evidence type="ECO:0000255" key="1">
    <source>
        <dbReference type="HAMAP-Rule" id="MF_00503"/>
    </source>
</evidence>
<evidence type="ECO:0000305" key="2"/>
<sequence>MAKRVQLALTESIASLGKEGDLVEVAPGYARNFLLPYGKAMNVTPAVLKQIERKKEKEKIAADKLKQEALDFQTALSTIGRFTIKKQVGEDGVLFGTVTNGDVAEAIEEATKKEIDRRNITVPDIHNLGSFTAKIKLHPEVNAEVNIEVTS</sequence>
<proteinExistence type="inferred from homology"/>
<organism>
    <name type="scientific">Prochlorococcus marinus (strain MIT 9215)</name>
    <dbReference type="NCBI Taxonomy" id="93060"/>
    <lineage>
        <taxon>Bacteria</taxon>
        <taxon>Bacillati</taxon>
        <taxon>Cyanobacteriota</taxon>
        <taxon>Cyanophyceae</taxon>
        <taxon>Synechococcales</taxon>
        <taxon>Prochlorococcaceae</taxon>
        <taxon>Prochlorococcus</taxon>
    </lineage>
</organism>
<dbReference type="EMBL" id="CP000825">
    <property type="protein sequence ID" value="ABV51559.1"/>
    <property type="molecule type" value="Genomic_DNA"/>
</dbReference>
<dbReference type="RefSeq" id="WP_012008546.1">
    <property type="nucleotide sequence ID" value="NC_009840.1"/>
</dbReference>
<dbReference type="SMR" id="A8G7H8"/>
<dbReference type="STRING" id="93060.P9215_19461"/>
<dbReference type="KEGG" id="pmh:P9215_19461"/>
<dbReference type="eggNOG" id="COG0359">
    <property type="taxonomic scope" value="Bacteria"/>
</dbReference>
<dbReference type="HOGENOM" id="CLU_078938_5_1_3"/>
<dbReference type="OrthoDB" id="9788336at2"/>
<dbReference type="Proteomes" id="UP000002014">
    <property type="component" value="Chromosome"/>
</dbReference>
<dbReference type="GO" id="GO:1990904">
    <property type="term" value="C:ribonucleoprotein complex"/>
    <property type="evidence" value="ECO:0007669"/>
    <property type="project" value="UniProtKB-KW"/>
</dbReference>
<dbReference type="GO" id="GO:0005840">
    <property type="term" value="C:ribosome"/>
    <property type="evidence" value="ECO:0007669"/>
    <property type="project" value="UniProtKB-KW"/>
</dbReference>
<dbReference type="GO" id="GO:0019843">
    <property type="term" value="F:rRNA binding"/>
    <property type="evidence" value="ECO:0007669"/>
    <property type="project" value="UniProtKB-UniRule"/>
</dbReference>
<dbReference type="GO" id="GO:0003735">
    <property type="term" value="F:structural constituent of ribosome"/>
    <property type="evidence" value="ECO:0007669"/>
    <property type="project" value="InterPro"/>
</dbReference>
<dbReference type="GO" id="GO:0006412">
    <property type="term" value="P:translation"/>
    <property type="evidence" value="ECO:0007669"/>
    <property type="project" value="UniProtKB-UniRule"/>
</dbReference>
<dbReference type="Gene3D" id="3.10.430.100">
    <property type="entry name" value="Ribosomal protein L9, C-terminal domain"/>
    <property type="match status" value="1"/>
</dbReference>
<dbReference type="Gene3D" id="3.40.5.10">
    <property type="entry name" value="Ribosomal protein L9, N-terminal domain"/>
    <property type="match status" value="1"/>
</dbReference>
<dbReference type="HAMAP" id="MF_00503">
    <property type="entry name" value="Ribosomal_bL9"/>
    <property type="match status" value="1"/>
</dbReference>
<dbReference type="InterPro" id="IPR000244">
    <property type="entry name" value="Ribosomal_bL9"/>
</dbReference>
<dbReference type="InterPro" id="IPR009027">
    <property type="entry name" value="Ribosomal_bL9/RNase_H1_N"/>
</dbReference>
<dbReference type="InterPro" id="IPR020594">
    <property type="entry name" value="Ribosomal_bL9_bac/chp"/>
</dbReference>
<dbReference type="InterPro" id="IPR020069">
    <property type="entry name" value="Ribosomal_bL9_C"/>
</dbReference>
<dbReference type="InterPro" id="IPR036791">
    <property type="entry name" value="Ribosomal_bL9_C_sf"/>
</dbReference>
<dbReference type="InterPro" id="IPR020070">
    <property type="entry name" value="Ribosomal_bL9_N"/>
</dbReference>
<dbReference type="InterPro" id="IPR036935">
    <property type="entry name" value="Ribosomal_bL9_N_sf"/>
</dbReference>
<dbReference type="NCBIfam" id="TIGR00158">
    <property type="entry name" value="L9"/>
    <property type="match status" value="1"/>
</dbReference>
<dbReference type="PANTHER" id="PTHR21368">
    <property type="entry name" value="50S RIBOSOMAL PROTEIN L9"/>
    <property type="match status" value="1"/>
</dbReference>
<dbReference type="Pfam" id="PF03948">
    <property type="entry name" value="Ribosomal_L9_C"/>
    <property type="match status" value="1"/>
</dbReference>
<dbReference type="Pfam" id="PF01281">
    <property type="entry name" value="Ribosomal_L9_N"/>
    <property type="match status" value="1"/>
</dbReference>
<dbReference type="SUPFAM" id="SSF55658">
    <property type="entry name" value="L9 N-domain-like"/>
    <property type="match status" value="1"/>
</dbReference>
<dbReference type="SUPFAM" id="SSF55653">
    <property type="entry name" value="Ribosomal protein L9 C-domain"/>
    <property type="match status" value="1"/>
</dbReference>
<dbReference type="PROSITE" id="PS00651">
    <property type="entry name" value="RIBOSOMAL_L9"/>
    <property type="match status" value="1"/>
</dbReference>
<reference key="1">
    <citation type="journal article" date="2007" name="PLoS Genet.">
        <title>Patterns and implications of gene gain and loss in the evolution of Prochlorococcus.</title>
        <authorList>
            <person name="Kettler G.C."/>
            <person name="Martiny A.C."/>
            <person name="Huang K."/>
            <person name="Zucker J."/>
            <person name="Coleman M.L."/>
            <person name="Rodrigue S."/>
            <person name="Chen F."/>
            <person name="Lapidus A."/>
            <person name="Ferriera S."/>
            <person name="Johnson J."/>
            <person name="Steglich C."/>
            <person name="Church G.M."/>
            <person name="Richardson P."/>
            <person name="Chisholm S.W."/>
        </authorList>
    </citation>
    <scope>NUCLEOTIDE SEQUENCE [LARGE SCALE GENOMIC DNA]</scope>
    <source>
        <strain>MIT 9215</strain>
    </source>
</reference>
<feature type="chain" id="PRO_1000060510" description="Large ribosomal subunit protein bL9">
    <location>
        <begin position="1"/>
        <end position="151"/>
    </location>
</feature>
<name>RL9_PROM2</name>
<gene>
    <name evidence="1" type="primary">rplI</name>
    <name evidence="1" type="synonym">rpl9</name>
    <name type="ordered locus">P9215_19461</name>
</gene>